<evidence type="ECO:0000255" key="1">
    <source>
        <dbReference type="HAMAP-Rule" id="MF_00178"/>
    </source>
</evidence>
<keyword id="KW-0686">Riboflavin biosynthesis</keyword>
<keyword id="KW-0808">Transferase</keyword>
<feature type="chain" id="PRO_1000203791" description="6,7-dimethyl-8-ribityllumazine synthase">
    <location>
        <begin position="1"/>
        <end position="154"/>
    </location>
</feature>
<feature type="active site" description="Proton donor" evidence="1">
    <location>
        <position position="88"/>
    </location>
</feature>
<feature type="binding site" evidence="1">
    <location>
        <position position="22"/>
    </location>
    <ligand>
        <name>5-amino-6-(D-ribitylamino)uracil</name>
        <dbReference type="ChEBI" id="CHEBI:15934"/>
    </ligand>
</feature>
<feature type="binding site" evidence="1">
    <location>
        <begin position="56"/>
        <end position="58"/>
    </location>
    <ligand>
        <name>5-amino-6-(D-ribitylamino)uracil</name>
        <dbReference type="ChEBI" id="CHEBI:15934"/>
    </ligand>
</feature>
<feature type="binding site" evidence="1">
    <location>
        <begin position="80"/>
        <end position="82"/>
    </location>
    <ligand>
        <name>5-amino-6-(D-ribitylamino)uracil</name>
        <dbReference type="ChEBI" id="CHEBI:15934"/>
    </ligand>
</feature>
<feature type="binding site" evidence="1">
    <location>
        <begin position="85"/>
        <end position="86"/>
    </location>
    <ligand>
        <name>(2S)-2-hydroxy-3-oxobutyl phosphate</name>
        <dbReference type="ChEBI" id="CHEBI:58830"/>
    </ligand>
</feature>
<feature type="binding site" evidence="1">
    <location>
        <position position="113"/>
    </location>
    <ligand>
        <name>5-amino-6-(D-ribitylamino)uracil</name>
        <dbReference type="ChEBI" id="CHEBI:15934"/>
    </ligand>
</feature>
<feature type="binding site" evidence="1">
    <location>
        <position position="127"/>
    </location>
    <ligand>
        <name>(2S)-2-hydroxy-3-oxobutyl phosphate</name>
        <dbReference type="ChEBI" id="CHEBI:58830"/>
    </ligand>
</feature>
<sequence>MNVIEGKMTQDGIKVGIVVARFNEFITSKLLGGAKDGLVRHDVPEENIDVAWVPGAFEIPLIAKKMAKSRKYDAIICLGAVIRGATSHYDYVCNEVSKGIASVSLESEIPVMFGVVTTENIEQAIERAGTKAGNKGYDCALGAIEMINLVRQIG</sequence>
<protein>
    <recommendedName>
        <fullName evidence="1">6,7-dimethyl-8-ribityllumazine synthase</fullName>
        <shortName evidence="1">DMRL synthase</shortName>
        <shortName evidence="1">LS</shortName>
        <shortName evidence="1">Lumazine synthase</shortName>
        <ecNumber evidence="1">2.5.1.78</ecNumber>
    </recommendedName>
</protein>
<gene>
    <name evidence="1" type="primary">ribH</name>
    <name type="ordered locus">EUBREC_3129</name>
</gene>
<organism>
    <name type="scientific">Agathobacter rectalis (strain ATCC 33656 / DSM 3377 / JCM 17463 / KCTC 5835 / VPI 0990)</name>
    <name type="common">Eubacterium rectale</name>
    <dbReference type="NCBI Taxonomy" id="515619"/>
    <lineage>
        <taxon>Bacteria</taxon>
        <taxon>Bacillati</taxon>
        <taxon>Bacillota</taxon>
        <taxon>Clostridia</taxon>
        <taxon>Lachnospirales</taxon>
        <taxon>Lachnospiraceae</taxon>
        <taxon>Agathobacter</taxon>
    </lineage>
</organism>
<comment type="function">
    <text evidence="1">Catalyzes the formation of 6,7-dimethyl-8-ribityllumazine by condensation of 5-amino-6-(D-ribitylamino)uracil with 3,4-dihydroxy-2-butanone 4-phosphate. This is the penultimate step in the biosynthesis of riboflavin.</text>
</comment>
<comment type="catalytic activity">
    <reaction evidence="1">
        <text>(2S)-2-hydroxy-3-oxobutyl phosphate + 5-amino-6-(D-ribitylamino)uracil = 6,7-dimethyl-8-(1-D-ribityl)lumazine + phosphate + 2 H2O + H(+)</text>
        <dbReference type="Rhea" id="RHEA:26152"/>
        <dbReference type="ChEBI" id="CHEBI:15377"/>
        <dbReference type="ChEBI" id="CHEBI:15378"/>
        <dbReference type="ChEBI" id="CHEBI:15934"/>
        <dbReference type="ChEBI" id="CHEBI:43474"/>
        <dbReference type="ChEBI" id="CHEBI:58201"/>
        <dbReference type="ChEBI" id="CHEBI:58830"/>
        <dbReference type="EC" id="2.5.1.78"/>
    </reaction>
</comment>
<comment type="pathway">
    <text evidence="1">Cofactor biosynthesis; riboflavin biosynthesis; riboflavin from 2-hydroxy-3-oxobutyl phosphate and 5-amino-6-(D-ribitylamino)uracil: step 1/2.</text>
</comment>
<comment type="similarity">
    <text evidence="1">Belongs to the DMRL synthase family.</text>
</comment>
<reference key="1">
    <citation type="journal article" date="2009" name="Proc. Natl. Acad. Sci. U.S.A.">
        <title>Characterizing a model human gut microbiota composed of members of its two dominant bacterial phyla.</title>
        <authorList>
            <person name="Mahowald M.A."/>
            <person name="Rey F.E."/>
            <person name="Seedorf H."/>
            <person name="Turnbaugh P.J."/>
            <person name="Fulton R.S."/>
            <person name="Wollam A."/>
            <person name="Shah N."/>
            <person name="Wang C."/>
            <person name="Magrini V."/>
            <person name="Wilson R.K."/>
            <person name="Cantarel B.L."/>
            <person name="Coutinho P.M."/>
            <person name="Henrissat B."/>
            <person name="Crock L.W."/>
            <person name="Russell A."/>
            <person name="Verberkmoes N.C."/>
            <person name="Hettich R.L."/>
            <person name="Gordon J.I."/>
        </authorList>
    </citation>
    <scope>NUCLEOTIDE SEQUENCE [LARGE SCALE GENOMIC DNA]</scope>
    <source>
        <strain>ATCC 33656 / DSM 3377 / JCM 17463 / KCTC 5835 / LMG 30912 / VPI 0990</strain>
    </source>
</reference>
<accession>C4Z8N0</accession>
<dbReference type="EC" id="2.5.1.78" evidence="1"/>
<dbReference type="EMBL" id="CP001107">
    <property type="protein sequence ID" value="ACR76857.1"/>
    <property type="molecule type" value="Genomic_DNA"/>
</dbReference>
<dbReference type="RefSeq" id="WP_012743884.1">
    <property type="nucleotide sequence ID" value="NC_012781.1"/>
</dbReference>
<dbReference type="SMR" id="C4Z8N0"/>
<dbReference type="STRING" id="515619.EUBREC_3129"/>
<dbReference type="PaxDb" id="515619-EUBREC_3129"/>
<dbReference type="GeneID" id="86989805"/>
<dbReference type="KEGG" id="ere:EUBREC_3129"/>
<dbReference type="HOGENOM" id="CLU_089358_1_1_9"/>
<dbReference type="UniPathway" id="UPA00275">
    <property type="reaction ID" value="UER00404"/>
</dbReference>
<dbReference type="Proteomes" id="UP000001477">
    <property type="component" value="Chromosome"/>
</dbReference>
<dbReference type="GO" id="GO:0005829">
    <property type="term" value="C:cytosol"/>
    <property type="evidence" value="ECO:0007669"/>
    <property type="project" value="TreeGrafter"/>
</dbReference>
<dbReference type="GO" id="GO:0009349">
    <property type="term" value="C:riboflavin synthase complex"/>
    <property type="evidence" value="ECO:0007669"/>
    <property type="project" value="InterPro"/>
</dbReference>
<dbReference type="GO" id="GO:0000906">
    <property type="term" value="F:6,7-dimethyl-8-ribityllumazine synthase activity"/>
    <property type="evidence" value="ECO:0007669"/>
    <property type="project" value="UniProtKB-UniRule"/>
</dbReference>
<dbReference type="GO" id="GO:0009231">
    <property type="term" value="P:riboflavin biosynthetic process"/>
    <property type="evidence" value="ECO:0007669"/>
    <property type="project" value="UniProtKB-UniRule"/>
</dbReference>
<dbReference type="CDD" id="cd09209">
    <property type="entry name" value="Lumazine_synthase-I"/>
    <property type="match status" value="1"/>
</dbReference>
<dbReference type="FunFam" id="3.40.50.960:FF:000001">
    <property type="entry name" value="6,7-dimethyl-8-ribityllumazine synthase"/>
    <property type="match status" value="1"/>
</dbReference>
<dbReference type="Gene3D" id="3.40.50.960">
    <property type="entry name" value="Lumazine/riboflavin synthase"/>
    <property type="match status" value="1"/>
</dbReference>
<dbReference type="HAMAP" id="MF_00178">
    <property type="entry name" value="Lumazine_synth"/>
    <property type="match status" value="1"/>
</dbReference>
<dbReference type="InterPro" id="IPR034964">
    <property type="entry name" value="LS"/>
</dbReference>
<dbReference type="InterPro" id="IPR002180">
    <property type="entry name" value="LS/RS"/>
</dbReference>
<dbReference type="InterPro" id="IPR036467">
    <property type="entry name" value="LS/RS_sf"/>
</dbReference>
<dbReference type="NCBIfam" id="TIGR00114">
    <property type="entry name" value="lumazine-synth"/>
    <property type="match status" value="1"/>
</dbReference>
<dbReference type="NCBIfam" id="NF000812">
    <property type="entry name" value="PRK00061.1-4"/>
    <property type="match status" value="1"/>
</dbReference>
<dbReference type="PANTHER" id="PTHR21058:SF0">
    <property type="entry name" value="6,7-DIMETHYL-8-RIBITYLLUMAZINE SYNTHASE"/>
    <property type="match status" value="1"/>
</dbReference>
<dbReference type="PANTHER" id="PTHR21058">
    <property type="entry name" value="6,7-DIMETHYL-8-RIBITYLLUMAZINE SYNTHASE DMRL SYNTHASE LUMAZINE SYNTHASE"/>
    <property type="match status" value="1"/>
</dbReference>
<dbReference type="Pfam" id="PF00885">
    <property type="entry name" value="DMRL_synthase"/>
    <property type="match status" value="1"/>
</dbReference>
<dbReference type="SUPFAM" id="SSF52121">
    <property type="entry name" value="Lumazine synthase"/>
    <property type="match status" value="1"/>
</dbReference>
<proteinExistence type="inferred from homology"/>
<name>RISB_AGARV</name>